<feature type="signal peptide" evidence="2">
    <location>
        <begin position="1"/>
        <end position="23"/>
    </location>
</feature>
<feature type="chain" id="PRO_0000333402" description="Protein ROT1">
    <location>
        <begin position="24"/>
        <end position="253"/>
    </location>
</feature>
<feature type="topological domain" description="Lumenal" evidence="2">
    <location>
        <begin position="24"/>
        <end position="232"/>
    </location>
</feature>
<feature type="transmembrane region" description="Helical" evidence="2">
    <location>
        <begin position="233"/>
        <end position="253"/>
    </location>
</feature>
<feature type="glycosylation site" description="N-linked (GlcNAc...) asparagine" evidence="2">
    <location>
        <position position="105"/>
    </location>
</feature>
<dbReference type="EMBL" id="AE016819">
    <property type="protein sequence ID" value="AAS53199.2"/>
    <property type="molecule type" value="Genomic_DNA"/>
</dbReference>
<dbReference type="RefSeq" id="NP_985375.2">
    <property type="nucleotide sequence ID" value="NM_210729.2"/>
</dbReference>
<dbReference type="FunCoup" id="Q755J8">
    <property type="interactions" value="33"/>
</dbReference>
<dbReference type="STRING" id="284811.Q755J8"/>
<dbReference type="GlyCosmos" id="Q755J8">
    <property type="glycosylation" value="1 site, No reported glycans"/>
</dbReference>
<dbReference type="EnsemblFungi" id="AAS53199">
    <property type="protein sequence ID" value="AAS53199"/>
    <property type="gene ID" value="AGOS_AFL175C"/>
</dbReference>
<dbReference type="GeneID" id="4621600"/>
<dbReference type="KEGG" id="ago:AGOS_AFL175C"/>
<dbReference type="eggNOG" id="ENOG502QQTG">
    <property type="taxonomic scope" value="Eukaryota"/>
</dbReference>
<dbReference type="HOGENOM" id="CLU_071622_0_0_1"/>
<dbReference type="InParanoid" id="Q755J8"/>
<dbReference type="OMA" id="YKPPQML"/>
<dbReference type="OrthoDB" id="5327821at2759"/>
<dbReference type="Proteomes" id="UP000000591">
    <property type="component" value="Chromosome VI"/>
</dbReference>
<dbReference type="GO" id="GO:0005789">
    <property type="term" value="C:endoplasmic reticulum membrane"/>
    <property type="evidence" value="ECO:0000318"/>
    <property type="project" value="GO_Central"/>
</dbReference>
<dbReference type="GO" id="GO:0051082">
    <property type="term" value="F:unfolded protein binding"/>
    <property type="evidence" value="ECO:0000318"/>
    <property type="project" value="GO_Central"/>
</dbReference>
<dbReference type="GO" id="GO:0006458">
    <property type="term" value="P:'de novo' protein folding"/>
    <property type="evidence" value="ECO:0000318"/>
    <property type="project" value="GO_Central"/>
</dbReference>
<dbReference type="GO" id="GO:0007118">
    <property type="term" value="P:budding cell apical bud growth"/>
    <property type="evidence" value="ECO:0000318"/>
    <property type="project" value="GO_Central"/>
</dbReference>
<dbReference type="InterPro" id="IPR019623">
    <property type="entry name" value="Rot1"/>
</dbReference>
<dbReference type="PANTHER" id="PTHR28090">
    <property type="entry name" value="PROTEIN ROT1"/>
    <property type="match status" value="1"/>
</dbReference>
<dbReference type="PANTHER" id="PTHR28090:SF1">
    <property type="entry name" value="PROTEIN ROT1"/>
    <property type="match status" value="1"/>
</dbReference>
<dbReference type="Pfam" id="PF10681">
    <property type="entry name" value="Rot1"/>
    <property type="match status" value="1"/>
</dbReference>
<dbReference type="PIRSF" id="PIRSF017290">
    <property type="entry name" value="ROT1_prd"/>
    <property type="match status" value="1"/>
</dbReference>
<protein>
    <recommendedName>
        <fullName>Protein ROT1</fullName>
    </recommendedName>
</protein>
<evidence type="ECO:0000250" key="1"/>
<evidence type="ECO:0000255" key="2"/>
<evidence type="ECO:0000305" key="3"/>
<keyword id="KW-0256">Endoplasmic reticulum</keyword>
<keyword id="KW-0325">Glycoprotein</keyword>
<keyword id="KW-0472">Membrane</keyword>
<keyword id="KW-1185">Reference proteome</keyword>
<keyword id="KW-0732">Signal</keyword>
<keyword id="KW-0812">Transmembrane</keyword>
<keyword id="KW-1133">Transmembrane helix</keyword>
<gene>
    <name type="primary">ROT1</name>
    <name type="ordered locus">AFL175C</name>
</gene>
<accession>Q755J8</accession>
<organism>
    <name type="scientific">Eremothecium gossypii (strain ATCC 10895 / CBS 109.51 / FGSC 9923 / NRRL Y-1056)</name>
    <name type="common">Yeast</name>
    <name type="synonym">Ashbya gossypii</name>
    <dbReference type="NCBI Taxonomy" id="284811"/>
    <lineage>
        <taxon>Eukaryota</taxon>
        <taxon>Fungi</taxon>
        <taxon>Dikarya</taxon>
        <taxon>Ascomycota</taxon>
        <taxon>Saccharomycotina</taxon>
        <taxon>Saccharomycetes</taxon>
        <taxon>Saccharomycetales</taxon>
        <taxon>Saccharomycetaceae</taxon>
        <taxon>Eremothecium</taxon>
    </lineage>
</organism>
<comment type="function">
    <text evidence="1">Required for normal levels of the cell wall 1,6-beta-glucan. Involved in a protein folding machinery chaperoning proteins acting in various physiological processes including cell wall synthesis and lysis of autophagic bodies (By similarity).</text>
</comment>
<comment type="subcellular location">
    <subcellularLocation>
        <location evidence="1">Endoplasmic reticulum membrane</location>
        <topology evidence="1">Single-pass type I membrane protein</topology>
    </subcellularLocation>
</comment>
<comment type="similarity">
    <text evidence="3">Belongs to the ROT1 family.</text>
</comment>
<reference key="1">
    <citation type="journal article" date="2004" name="Science">
        <title>The Ashbya gossypii genome as a tool for mapping the ancient Saccharomyces cerevisiae genome.</title>
        <authorList>
            <person name="Dietrich F.S."/>
            <person name="Voegeli S."/>
            <person name="Brachat S."/>
            <person name="Lerch A."/>
            <person name="Gates K."/>
            <person name="Steiner S."/>
            <person name="Mohr C."/>
            <person name="Poehlmann R."/>
            <person name="Luedi P."/>
            <person name="Choi S."/>
            <person name="Wing R.A."/>
            <person name="Flavier A."/>
            <person name="Gaffney T.D."/>
            <person name="Philippsen P."/>
        </authorList>
    </citation>
    <scope>NUCLEOTIDE SEQUENCE [LARGE SCALE GENOMIC DNA]</scope>
    <source>
        <strain>ATCC 10895 / CBS 109.51 / FGSC 9923 / NRRL Y-1056</strain>
    </source>
</reference>
<reference key="2">
    <citation type="journal article" date="2013" name="G3 (Bethesda)">
        <title>Genomes of Ashbya fungi isolated from insects reveal four mating-type loci, numerous translocations, lack of transposons, and distinct gene duplications.</title>
        <authorList>
            <person name="Dietrich F.S."/>
            <person name="Voegeli S."/>
            <person name="Kuo S."/>
            <person name="Philippsen P."/>
        </authorList>
    </citation>
    <scope>GENOME REANNOTATION</scope>
    <scope>SEQUENCE REVISION TO 153</scope>
    <source>
        <strain>ATCC 10895 / CBS 109.51 / FGSC 9923 / NRRL Y-1056</strain>
    </source>
</reference>
<proteinExistence type="inferred from homology"/>
<sequence length="253" mass="27881">MVYVSWSAAALLCASFFSTVVLAQSAKDLYGTWSAKSNQVFTGPGFYNPADELLIEPSLPGISYSFTEDGFFEMATYRVSGNPRNLACPSAVMTFQHGKYEILANGTLILRPFEVDGRQLVSEPCVDKGVSTYLRYSQVETFQRFAVELDEYHGKHALHLFQFDGSPVQPLYLAYRPPLMLPTITLNPTDHAGATATAGPGHRKRSLGELVRAGLQDKHKTTAVRNPSLFNAAFYWWCSAGVIAAGTVLFFMV</sequence>
<name>ROT1_EREGS</name>